<sequence length="375" mass="41287">MSCPVIELTQQLIRRPSLSPDDAGCQALLIERLQAIGFTVERMDFADTQNFWAWRGQGETLAFAGHTDVVPPGDADRWINPPFEPTIRDGMLFGRGAADMKGSLAAMVVAAERFVAQHPNHTGRLAFLITSDEEASAHNGTVKVVEALMARNERLDYCLVGEPSSIEVVGDVVKNGRRGSLTCNLTIHGVQGHVAYPHLADNPVHRAAPFLNELVAIEWDQSNEFFPATSMQIANIQAGTGSNNVTPGELFVQFNFRFSTELTDEMIKAQVLALLEKHQLRYTVDWWLSGQPFLTARGKLVDAVVNAVEHYNEIKPQLLTTGGTSDGRFIARMGAQVVELGPVNATIHKINECVNAADLQLLARMYQRIMEQLVA</sequence>
<proteinExistence type="inferred from homology"/>
<reference key="1">
    <citation type="journal article" date="2005" name="Nucleic Acids Res.">
        <title>Genome dynamics and diversity of Shigella species, the etiologic agents of bacillary dysentery.</title>
        <authorList>
            <person name="Yang F."/>
            <person name="Yang J."/>
            <person name="Zhang X."/>
            <person name="Chen L."/>
            <person name="Jiang Y."/>
            <person name="Yan Y."/>
            <person name="Tang X."/>
            <person name="Wang J."/>
            <person name="Xiong Z."/>
            <person name="Dong J."/>
            <person name="Xue Y."/>
            <person name="Zhu Y."/>
            <person name="Xu X."/>
            <person name="Sun L."/>
            <person name="Chen S."/>
            <person name="Nie H."/>
            <person name="Peng J."/>
            <person name="Xu J."/>
            <person name="Wang Y."/>
            <person name="Yuan Z."/>
            <person name="Wen Y."/>
            <person name="Yao Z."/>
            <person name="Shen Y."/>
            <person name="Qiang B."/>
            <person name="Hou Y."/>
            <person name="Yu J."/>
            <person name="Jin Q."/>
        </authorList>
    </citation>
    <scope>NUCLEOTIDE SEQUENCE [LARGE SCALE GENOMIC DNA]</scope>
    <source>
        <strain>Sd197</strain>
    </source>
</reference>
<organism>
    <name type="scientific">Shigella dysenteriae serotype 1 (strain Sd197)</name>
    <dbReference type="NCBI Taxonomy" id="300267"/>
    <lineage>
        <taxon>Bacteria</taxon>
        <taxon>Pseudomonadati</taxon>
        <taxon>Pseudomonadota</taxon>
        <taxon>Gammaproteobacteria</taxon>
        <taxon>Enterobacterales</taxon>
        <taxon>Enterobacteriaceae</taxon>
        <taxon>Shigella</taxon>
    </lineage>
</organism>
<evidence type="ECO:0000255" key="1">
    <source>
        <dbReference type="HAMAP-Rule" id="MF_01690"/>
    </source>
</evidence>
<gene>
    <name evidence="1" type="primary">dapE</name>
    <name type="ordered locus">SDY_2656</name>
</gene>
<dbReference type="EC" id="3.5.1.18" evidence="1"/>
<dbReference type="EMBL" id="CP000034">
    <property type="protein sequence ID" value="ABB62707.1"/>
    <property type="molecule type" value="Genomic_DNA"/>
</dbReference>
<dbReference type="RefSeq" id="WP_001277808.1">
    <property type="nucleotide sequence ID" value="NC_007606.1"/>
</dbReference>
<dbReference type="RefSeq" id="YP_404198.1">
    <property type="nucleotide sequence ID" value="NC_007606.1"/>
</dbReference>
<dbReference type="SMR" id="Q32D98"/>
<dbReference type="STRING" id="300267.SDY_2656"/>
<dbReference type="MEROPS" id="M20.010"/>
<dbReference type="EnsemblBacteria" id="ABB62707">
    <property type="protein sequence ID" value="ABB62707"/>
    <property type="gene ID" value="SDY_2656"/>
</dbReference>
<dbReference type="KEGG" id="sdy:SDY_2656"/>
<dbReference type="PATRIC" id="fig|300267.13.peg.3205"/>
<dbReference type="HOGENOM" id="CLU_021802_4_0_6"/>
<dbReference type="UniPathway" id="UPA00034">
    <property type="reaction ID" value="UER00021"/>
</dbReference>
<dbReference type="Proteomes" id="UP000002716">
    <property type="component" value="Chromosome"/>
</dbReference>
<dbReference type="GO" id="GO:0008777">
    <property type="term" value="F:acetylornithine deacetylase activity"/>
    <property type="evidence" value="ECO:0007669"/>
    <property type="project" value="TreeGrafter"/>
</dbReference>
<dbReference type="GO" id="GO:0050897">
    <property type="term" value="F:cobalt ion binding"/>
    <property type="evidence" value="ECO:0007669"/>
    <property type="project" value="UniProtKB-UniRule"/>
</dbReference>
<dbReference type="GO" id="GO:0009014">
    <property type="term" value="F:succinyl-diaminopimelate desuccinylase activity"/>
    <property type="evidence" value="ECO:0007669"/>
    <property type="project" value="UniProtKB-UniRule"/>
</dbReference>
<dbReference type="GO" id="GO:0008270">
    <property type="term" value="F:zinc ion binding"/>
    <property type="evidence" value="ECO:0007669"/>
    <property type="project" value="UniProtKB-UniRule"/>
</dbReference>
<dbReference type="GO" id="GO:0019877">
    <property type="term" value="P:diaminopimelate biosynthetic process"/>
    <property type="evidence" value="ECO:0007669"/>
    <property type="project" value="UniProtKB-UniRule"/>
</dbReference>
<dbReference type="GO" id="GO:0006526">
    <property type="term" value="P:L-arginine biosynthetic process"/>
    <property type="evidence" value="ECO:0007669"/>
    <property type="project" value="TreeGrafter"/>
</dbReference>
<dbReference type="GO" id="GO:0009089">
    <property type="term" value="P:lysine biosynthetic process via diaminopimelate"/>
    <property type="evidence" value="ECO:0007669"/>
    <property type="project" value="UniProtKB-UniRule"/>
</dbReference>
<dbReference type="CDD" id="cd03891">
    <property type="entry name" value="M20_DapE_proteobac"/>
    <property type="match status" value="1"/>
</dbReference>
<dbReference type="FunFam" id="3.30.70.360:FF:000011">
    <property type="entry name" value="Succinyl-diaminopimelate desuccinylase"/>
    <property type="match status" value="1"/>
</dbReference>
<dbReference type="FunFam" id="3.40.630.10:FF:000005">
    <property type="entry name" value="Succinyl-diaminopimelate desuccinylase"/>
    <property type="match status" value="1"/>
</dbReference>
<dbReference type="FunFam" id="3.40.630.10:FF:000010">
    <property type="entry name" value="Succinyl-diaminopimelate desuccinylase"/>
    <property type="match status" value="1"/>
</dbReference>
<dbReference type="Gene3D" id="3.40.630.10">
    <property type="entry name" value="Zn peptidases"/>
    <property type="match status" value="2"/>
</dbReference>
<dbReference type="HAMAP" id="MF_01690">
    <property type="entry name" value="DapE"/>
    <property type="match status" value="1"/>
</dbReference>
<dbReference type="InterPro" id="IPR001261">
    <property type="entry name" value="ArgE/DapE_CS"/>
</dbReference>
<dbReference type="InterPro" id="IPR036264">
    <property type="entry name" value="Bact_exopeptidase_dim_dom"/>
</dbReference>
<dbReference type="InterPro" id="IPR005941">
    <property type="entry name" value="DapE_proteobac"/>
</dbReference>
<dbReference type="InterPro" id="IPR002933">
    <property type="entry name" value="Peptidase_M20"/>
</dbReference>
<dbReference type="InterPro" id="IPR011650">
    <property type="entry name" value="Peptidase_M20_dimer"/>
</dbReference>
<dbReference type="InterPro" id="IPR050072">
    <property type="entry name" value="Peptidase_M20A"/>
</dbReference>
<dbReference type="NCBIfam" id="TIGR01246">
    <property type="entry name" value="dapE_proteo"/>
    <property type="match status" value="1"/>
</dbReference>
<dbReference type="NCBIfam" id="NF009557">
    <property type="entry name" value="PRK13009.1"/>
    <property type="match status" value="1"/>
</dbReference>
<dbReference type="PANTHER" id="PTHR43808">
    <property type="entry name" value="ACETYLORNITHINE DEACETYLASE"/>
    <property type="match status" value="1"/>
</dbReference>
<dbReference type="PANTHER" id="PTHR43808:SF31">
    <property type="entry name" value="N-ACETYL-L-CITRULLINE DEACETYLASE"/>
    <property type="match status" value="1"/>
</dbReference>
<dbReference type="Pfam" id="PF07687">
    <property type="entry name" value="M20_dimer"/>
    <property type="match status" value="1"/>
</dbReference>
<dbReference type="Pfam" id="PF01546">
    <property type="entry name" value="Peptidase_M20"/>
    <property type="match status" value="1"/>
</dbReference>
<dbReference type="SUPFAM" id="SSF55031">
    <property type="entry name" value="Bacterial exopeptidase dimerisation domain"/>
    <property type="match status" value="1"/>
</dbReference>
<dbReference type="SUPFAM" id="SSF53187">
    <property type="entry name" value="Zn-dependent exopeptidases"/>
    <property type="match status" value="1"/>
</dbReference>
<dbReference type="PROSITE" id="PS00758">
    <property type="entry name" value="ARGE_DAPE_CPG2_1"/>
    <property type="match status" value="1"/>
</dbReference>
<dbReference type="PROSITE" id="PS00759">
    <property type="entry name" value="ARGE_DAPE_CPG2_2"/>
    <property type="match status" value="1"/>
</dbReference>
<accession>Q32D98</accession>
<protein>
    <recommendedName>
        <fullName evidence="1">Succinyl-diaminopimelate desuccinylase</fullName>
        <shortName evidence="1">SDAP desuccinylase</shortName>
        <ecNumber evidence="1">3.5.1.18</ecNumber>
    </recommendedName>
    <alternativeName>
        <fullName evidence="1">N-succinyl-LL-2,6-diaminoheptanedioate amidohydrolase</fullName>
    </alternativeName>
</protein>
<feature type="chain" id="PRO_0000375747" description="Succinyl-diaminopimelate desuccinylase">
    <location>
        <begin position="1"/>
        <end position="375"/>
    </location>
</feature>
<feature type="active site" evidence="1">
    <location>
        <position position="68"/>
    </location>
</feature>
<feature type="active site" description="Proton acceptor" evidence="1">
    <location>
        <position position="133"/>
    </location>
</feature>
<feature type="binding site" evidence="1">
    <location>
        <position position="66"/>
    </location>
    <ligand>
        <name>Zn(2+)</name>
        <dbReference type="ChEBI" id="CHEBI:29105"/>
        <label>1</label>
    </ligand>
</feature>
<feature type="binding site" evidence="1">
    <location>
        <position position="99"/>
    </location>
    <ligand>
        <name>Zn(2+)</name>
        <dbReference type="ChEBI" id="CHEBI:29105"/>
        <label>1</label>
    </ligand>
</feature>
<feature type="binding site" evidence="1">
    <location>
        <position position="99"/>
    </location>
    <ligand>
        <name>Zn(2+)</name>
        <dbReference type="ChEBI" id="CHEBI:29105"/>
        <label>2</label>
    </ligand>
</feature>
<feature type="binding site" evidence="1">
    <location>
        <position position="134"/>
    </location>
    <ligand>
        <name>Zn(2+)</name>
        <dbReference type="ChEBI" id="CHEBI:29105"/>
        <label>2</label>
    </ligand>
</feature>
<feature type="binding site" evidence="1">
    <location>
        <position position="162"/>
    </location>
    <ligand>
        <name>Zn(2+)</name>
        <dbReference type="ChEBI" id="CHEBI:29105"/>
        <label>1</label>
    </ligand>
</feature>
<feature type="binding site" evidence="1">
    <location>
        <position position="348"/>
    </location>
    <ligand>
        <name>Zn(2+)</name>
        <dbReference type="ChEBI" id="CHEBI:29105"/>
        <label>2</label>
    </ligand>
</feature>
<keyword id="KW-0028">Amino-acid biosynthesis</keyword>
<keyword id="KW-0170">Cobalt</keyword>
<keyword id="KW-0220">Diaminopimelate biosynthesis</keyword>
<keyword id="KW-0378">Hydrolase</keyword>
<keyword id="KW-0457">Lysine biosynthesis</keyword>
<keyword id="KW-0479">Metal-binding</keyword>
<keyword id="KW-1185">Reference proteome</keyword>
<keyword id="KW-0862">Zinc</keyword>
<name>DAPE_SHIDS</name>
<comment type="function">
    <text evidence="1">Catalyzes the hydrolysis of N-succinyl-L,L-diaminopimelic acid (SDAP), forming succinate and LL-2,6-diaminopimelate (DAP), an intermediate involved in the bacterial biosynthesis of lysine and meso-diaminopimelic acid, an essential component of bacterial cell walls.</text>
</comment>
<comment type="catalytic activity">
    <reaction evidence="1">
        <text>N-succinyl-(2S,6S)-2,6-diaminopimelate + H2O = (2S,6S)-2,6-diaminopimelate + succinate</text>
        <dbReference type="Rhea" id="RHEA:22608"/>
        <dbReference type="ChEBI" id="CHEBI:15377"/>
        <dbReference type="ChEBI" id="CHEBI:30031"/>
        <dbReference type="ChEBI" id="CHEBI:57609"/>
        <dbReference type="ChEBI" id="CHEBI:58087"/>
        <dbReference type="EC" id="3.5.1.18"/>
    </reaction>
</comment>
<comment type="cofactor">
    <cofactor evidence="1">
        <name>Zn(2+)</name>
        <dbReference type="ChEBI" id="CHEBI:29105"/>
    </cofactor>
    <cofactor evidence="1">
        <name>Co(2+)</name>
        <dbReference type="ChEBI" id="CHEBI:48828"/>
    </cofactor>
    <text evidence="1">Binds 2 Zn(2+) or Co(2+) ions per subunit.</text>
</comment>
<comment type="pathway">
    <text evidence="1">Amino-acid biosynthesis; L-lysine biosynthesis via DAP pathway; LL-2,6-diaminopimelate from (S)-tetrahydrodipicolinate (succinylase route): step 3/3.</text>
</comment>
<comment type="subunit">
    <text evidence="1">Homodimer.</text>
</comment>
<comment type="similarity">
    <text evidence="1">Belongs to the peptidase M20A family. DapE subfamily.</text>
</comment>